<accession>Q8RSY9</accession>
<accession>C3K5V6</accession>
<proteinExistence type="inferred from homology"/>
<sequence>MSPLKCMALAALGAVMFVGSAQAQTCDWPLWQNYAKRFVQDDGRVLNSSMKPTESSSEGQSYAMFFALVGNDRASFDKLWTWTKANMSGADIGQNLPGWLWGKKADNTWGVIDPNSASDADLWMAYALLEAARVWNAPQYRADAQLLLANVERNLIVRVPGLGKMLLPGPVGYVHAGGLWRFNPSYQVLAQLRRFHKERPNAGWNEVADSNAKMLADTASNPHGLAANWVGYRATSANTGLFVVDPFSDDLGSYDAIRTYMWAGMTAKGDPLAAPMLKSLGGMTRATAASATGYPPEKIHVLTGEVEKNNGYTPMGFSASTVAFFQARGETALAQLQKAKVDDALAKALAPSAPDTAQPIYYDYMLSLFSQGFADQKYRFEQDGTVKLSWEAACAVTR</sequence>
<dbReference type="EC" id="3.2.1.4"/>
<dbReference type="EMBL" id="AY074776">
    <property type="protein sequence ID" value="AAL71844.1"/>
    <property type="status" value="ALT_INIT"/>
    <property type="molecule type" value="Genomic_DNA"/>
</dbReference>
<dbReference type="EMBL" id="AM181176">
    <property type="protein sequence ID" value="CAY46580.1"/>
    <property type="molecule type" value="Genomic_DNA"/>
</dbReference>
<dbReference type="RefSeq" id="WP_012721724.1">
    <property type="nucleotide sequence ID" value="NC_012660.1"/>
</dbReference>
<dbReference type="SMR" id="Q8RSY9"/>
<dbReference type="CAZy" id="GH8">
    <property type="family name" value="Glycoside Hydrolase Family 8"/>
</dbReference>
<dbReference type="PATRIC" id="fig|216595.4.peg.536"/>
<dbReference type="eggNOG" id="COG3405">
    <property type="taxonomic scope" value="Bacteria"/>
</dbReference>
<dbReference type="HOGENOM" id="CLU_037297_0_0_6"/>
<dbReference type="OrthoDB" id="9766708at2"/>
<dbReference type="UniPathway" id="UPA00694"/>
<dbReference type="GO" id="GO:0005576">
    <property type="term" value="C:extracellular region"/>
    <property type="evidence" value="ECO:0007669"/>
    <property type="project" value="UniProtKB-SubCell"/>
</dbReference>
<dbReference type="GO" id="GO:0008810">
    <property type="term" value="F:cellulase activity"/>
    <property type="evidence" value="ECO:0007669"/>
    <property type="project" value="UniProtKB-EC"/>
</dbReference>
<dbReference type="GO" id="GO:0030245">
    <property type="term" value="P:cellulose catabolic process"/>
    <property type="evidence" value="ECO:0007669"/>
    <property type="project" value="UniProtKB-KW"/>
</dbReference>
<dbReference type="Gene3D" id="1.50.10.10">
    <property type="match status" value="1"/>
</dbReference>
<dbReference type="InterPro" id="IPR008928">
    <property type="entry name" value="6-hairpin_glycosidase_sf"/>
</dbReference>
<dbReference type="InterPro" id="IPR012341">
    <property type="entry name" value="6hp_glycosidase-like_sf"/>
</dbReference>
<dbReference type="InterPro" id="IPR002037">
    <property type="entry name" value="Glyco_hydro_8"/>
</dbReference>
<dbReference type="InterPro" id="IPR019834">
    <property type="entry name" value="Glyco_hydro_8_CS"/>
</dbReference>
<dbReference type="NCBIfam" id="NF008305">
    <property type="entry name" value="PRK11097.1"/>
    <property type="match status" value="1"/>
</dbReference>
<dbReference type="Pfam" id="PF01270">
    <property type="entry name" value="Glyco_hydro_8"/>
    <property type="match status" value="1"/>
</dbReference>
<dbReference type="PRINTS" id="PR00735">
    <property type="entry name" value="GLHYDRLASE8"/>
</dbReference>
<dbReference type="SUPFAM" id="SSF48208">
    <property type="entry name" value="Six-hairpin glycosidases"/>
    <property type="match status" value="1"/>
</dbReference>
<dbReference type="PROSITE" id="PS00812">
    <property type="entry name" value="GLYCOSYL_HYDROL_F8"/>
    <property type="match status" value="1"/>
</dbReference>
<protein>
    <recommendedName>
        <fullName>Endoglucanase</fullName>
        <ecNumber>3.2.1.4</ecNumber>
    </recommendedName>
    <alternativeName>
        <fullName>Carboxymethylcellulase</fullName>
        <shortName>CMCase</shortName>
    </alternativeName>
    <alternativeName>
        <fullName>Cellulase</fullName>
    </alternativeName>
    <alternativeName>
        <fullName>Endo-1,4-beta-glucanase</fullName>
    </alternativeName>
</protein>
<feature type="signal peptide" evidence="2">
    <location>
        <begin position="1"/>
        <end position="23"/>
    </location>
</feature>
<feature type="chain" id="PRO_0000007942" description="Endoglucanase">
    <location>
        <begin position="24"/>
        <end position="398"/>
    </location>
</feature>
<feature type="active site" description="Proton donor" evidence="1">
    <location>
        <position position="58"/>
    </location>
</feature>
<feature type="active site" description="Nucleophile" evidence="3">
    <location>
        <position position="119"/>
    </location>
</feature>
<keyword id="KW-0119">Carbohydrate metabolism</keyword>
<keyword id="KW-0136">Cellulose degradation</keyword>
<keyword id="KW-0326">Glycosidase</keyword>
<keyword id="KW-0378">Hydrolase</keyword>
<keyword id="KW-0624">Polysaccharide degradation</keyword>
<keyword id="KW-0964">Secreted</keyword>
<keyword id="KW-0732">Signal</keyword>
<organism>
    <name type="scientific">Pseudomonas fluorescens (strain SBW25)</name>
    <dbReference type="NCBI Taxonomy" id="216595"/>
    <lineage>
        <taxon>Bacteria</taxon>
        <taxon>Pseudomonadati</taxon>
        <taxon>Pseudomonadota</taxon>
        <taxon>Gammaproteobacteria</taxon>
        <taxon>Pseudomonadales</taxon>
        <taxon>Pseudomonadaceae</taxon>
        <taxon>Pseudomonas</taxon>
    </lineage>
</organism>
<comment type="function">
    <text evidence="1">Hydrolyzes carboxymethylcellulose.</text>
</comment>
<comment type="catalytic activity">
    <reaction>
        <text>Endohydrolysis of (1-&gt;4)-beta-D-glucosidic linkages in cellulose, lichenin and cereal beta-D-glucans.</text>
        <dbReference type="EC" id="3.2.1.4"/>
    </reaction>
</comment>
<comment type="pathway">
    <text>Glycan metabolism; bacterial cellulose biosynthesis.</text>
</comment>
<comment type="subcellular location">
    <subcellularLocation>
        <location evidence="1">Secreted</location>
    </subcellularLocation>
</comment>
<comment type="similarity">
    <text evidence="4">Belongs to the glycosyl hydrolase 8 (cellulase D) family.</text>
</comment>
<comment type="sequence caution" evidence="4">
    <conflict type="erroneous initiation">
        <sequence resource="EMBL-CDS" id="AAL71844"/>
    </conflict>
</comment>
<gene>
    <name type="primary">bcsZ</name>
    <name type="synonym">wssD</name>
    <name type="ordered locus">PFLU_0303</name>
</gene>
<name>GUN_PSEFS</name>
<reference key="1">
    <citation type="journal article" date="2002" name="Genetics">
        <title>Adaptive divergence in experimental populations of Pseudomonas fluorescens. I. Genetic and phenotypic bases of wrinkly spreader fitness.</title>
        <authorList>
            <person name="Spiers A.J."/>
            <person name="Kahn S.G."/>
            <person name="Bohannon J."/>
            <person name="Travisano M."/>
            <person name="Rainey P.B."/>
        </authorList>
    </citation>
    <scope>NUCLEOTIDE SEQUENCE [GENOMIC DNA]</scope>
</reference>
<reference key="2">
    <citation type="journal article" date="2009" name="Genome Biol.">
        <title>Genomic and genetic analyses of diversity and plant interactions of Pseudomonas fluorescens.</title>
        <authorList>
            <person name="Silby M.W."/>
            <person name="Cerdeno-Tarraga A.M."/>
            <person name="Vernikos G.S."/>
            <person name="Giddens S.R."/>
            <person name="Jackson R.W."/>
            <person name="Preston G.M."/>
            <person name="Zhang X.-X."/>
            <person name="Moon C.D."/>
            <person name="Gehrig S.M."/>
            <person name="Godfrey S.A.C."/>
            <person name="Knight C.G."/>
            <person name="Malone J.G."/>
            <person name="Robinson Z."/>
            <person name="Spiers A.J."/>
            <person name="Harris S."/>
            <person name="Challis G.L."/>
            <person name="Yaxley A.M."/>
            <person name="Harris D."/>
            <person name="Seeger K."/>
            <person name="Murphy L."/>
            <person name="Rutter S."/>
            <person name="Squares R."/>
            <person name="Quail M.A."/>
            <person name="Saunders E."/>
            <person name="Mavromatis K."/>
            <person name="Brettin T.S."/>
            <person name="Bentley S.D."/>
            <person name="Hothersall J."/>
            <person name="Stephens E."/>
            <person name="Thomas C.M."/>
            <person name="Parkhill J."/>
            <person name="Levy S.B."/>
            <person name="Rainey P.B."/>
            <person name="Thomson N.R."/>
        </authorList>
    </citation>
    <scope>NUCLEOTIDE SEQUENCE [LARGE SCALE GENOMIC DNA]</scope>
    <source>
        <strain>SBW25</strain>
    </source>
</reference>
<evidence type="ECO:0000250" key="1"/>
<evidence type="ECO:0000255" key="2"/>
<evidence type="ECO:0000255" key="3">
    <source>
        <dbReference type="PROSITE-ProRule" id="PRU10058"/>
    </source>
</evidence>
<evidence type="ECO:0000305" key="4"/>